<gene>
    <name evidence="1" type="primary">rbfA</name>
    <name type="ordered locus">glr4032</name>
</gene>
<reference key="1">
    <citation type="journal article" date="2003" name="DNA Res.">
        <title>Complete genome structure of Gloeobacter violaceus PCC 7421, a cyanobacterium that lacks thylakoids.</title>
        <authorList>
            <person name="Nakamura Y."/>
            <person name="Kaneko T."/>
            <person name="Sato S."/>
            <person name="Mimuro M."/>
            <person name="Miyashita H."/>
            <person name="Tsuchiya T."/>
            <person name="Sasamoto S."/>
            <person name="Watanabe A."/>
            <person name="Kawashima K."/>
            <person name="Kishida Y."/>
            <person name="Kiyokawa C."/>
            <person name="Kohara M."/>
            <person name="Matsumoto M."/>
            <person name="Matsuno A."/>
            <person name="Nakazaki N."/>
            <person name="Shimpo S."/>
            <person name="Takeuchi C."/>
            <person name="Yamada M."/>
            <person name="Tabata S."/>
        </authorList>
    </citation>
    <scope>NUCLEOTIDE SEQUENCE [LARGE SCALE GENOMIC DNA]</scope>
    <source>
        <strain>ATCC 29082 / PCC 7421</strain>
    </source>
</reference>
<dbReference type="EMBL" id="BA000045">
    <property type="protein sequence ID" value="BAC91973.1"/>
    <property type="molecule type" value="Genomic_DNA"/>
</dbReference>
<dbReference type="RefSeq" id="NP_926978.1">
    <property type="nucleotide sequence ID" value="NC_005125.1"/>
</dbReference>
<dbReference type="RefSeq" id="WP_011144020.1">
    <property type="nucleotide sequence ID" value="NC_005125.1"/>
</dbReference>
<dbReference type="SMR" id="Q7NE48"/>
<dbReference type="FunCoup" id="Q7NE48">
    <property type="interactions" value="15"/>
</dbReference>
<dbReference type="STRING" id="251221.gene:10761550"/>
<dbReference type="EnsemblBacteria" id="BAC91973">
    <property type="protein sequence ID" value="BAC91973"/>
    <property type="gene ID" value="BAC91973"/>
</dbReference>
<dbReference type="KEGG" id="gvi:glr4032"/>
<dbReference type="PATRIC" id="fig|251221.4.peg.4064"/>
<dbReference type="eggNOG" id="COG0858">
    <property type="taxonomic scope" value="Bacteria"/>
</dbReference>
<dbReference type="HOGENOM" id="CLU_089475_2_1_3"/>
<dbReference type="InParanoid" id="Q7NE48"/>
<dbReference type="OrthoDB" id="307788at2"/>
<dbReference type="PhylomeDB" id="Q7NE48"/>
<dbReference type="Proteomes" id="UP000000557">
    <property type="component" value="Chromosome"/>
</dbReference>
<dbReference type="GO" id="GO:0005829">
    <property type="term" value="C:cytosol"/>
    <property type="evidence" value="ECO:0000318"/>
    <property type="project" value="GO_Central"/>
</dbReference>
<dbReference type="GO" id="GO:0043024">
    <property type="term" value="F:ribosomal small subunit binding"/>
    <property type="evidence" value="ECO:0000318"/>
    <property type="project" value="GO_Central"/>
</dbReference>
<dbReference type="GO" id="GO:0030490">
    <property type="term" value="P:maturation of SSU-rRNA"/>
    <property type="evidence" value="ECO:0007669"/>
    <property type="project" value="UniProtKB-UniRule"/>
</dbReference>
<dbReference type="GO" id="GO:0042254">
    <property type="term" value="P:ribosome biogenesis"/>
    <property type="evidence" value="ECO:0000318"/>
    <property type="project" value="GO_Central"/>
</dbReference>
<dbReference type="FunFam" id="3.30.300.20:FF:000009">
    <property type="entry name" value="Ribosome-binding factor A"/>
    <property type="match status" value="1"/>
</dbReference>
<dbReference type="Gene3D" id="3.30.300.20">
    <property type="match status" value="1"/>
</dbReference>
<dbReference type="HAMAP" id="MF_00003">
    <property type="entry name" value="RbfA"/>
    <property type="match status" value="1"/>
</dbReference>
<dbReference type="InterPro" id="IPR015946">
    <property type="entry name" value="KH_dom-like_a/b"/>
</dbReference>
<dbReference type="InterPro" id="IPR000238">
    <property type="entry name" value="RbfA"/>
</dbReference>
<dbReference type="InterPro" id="IPR023799">
    <property type="entry name" value="RbfA_dom_sf"/>
</dbReference>
<dbReference type="InterPro" id="IPR020053">
    <property type="entry name" value="Ribosome-bd_factorA_CS"/>
</dbReference>
<dbReference type="NCBIfam" id="TIGR00082">
    <property type="entry name" value="rbfA"/>
    <property type="match status" value="1"/>
</dbReference>
<dbReference type="PANTHER" id="PTHR33515">
    <property type="entry name" value="RIBOSOME-BINDING FACTOR A, CHLOROPLASTIC-RELATED"/>
    <property type="match status" value="1"/>
</dbReference>
<dbReference type="PANTHER" id="PTHR33515:SF1">
    <property type="entry name" value="RIBOSOME-BINDING FACTOR A, CHLOROPLASTIC-RELATED"/>
    <property type="match status" value="1"/>
</dbReference>
<dbReference type="Pfam" id="PF02033">
    <property type="entry name" value="RBFA"/>
    <property type="match status" value="1"/>
</dbReference>
<dbReference type="SUPFAM" id="SSF89919">
    <property type="entry name" value="Ribosome-binding factor A, RbfA"/>
    <property type="match status" value="1"/>
</dbReference>
<dbReference type="PROSITE" id="PS01319">
    <property type="entry name" value="RBFA"/>
    <property type="match status" value="1"/>
</dbReference>
<organism>
    <name type="scientific">Gloeobacter violaceus (strain ATCC 29082 / PCC 7421)</name>
    <dbReference type="NCBI Taxonomy" id="251221"/>
    <lineage>
        <taxon>Bacteria</taxon>
        <taxon>Bacillati</taxon>
        <taxon>Cyanobacteriota</taxon>
        <taxon>Cyanophyceae</taxon>
        <taxon>Gloeobacterales</taxon>
        <taxon>Gloeobacteraceae</taxon>
        <taxon>Gloeobacter</taxon>
    </lineage>
</organism>
<sequence length="129" mass="14550">MKTHRPARVGELIKREVSDMLLRGQIKDPRVGAGLVSVTDVEVTGDLRQAKIFVSIFGTPEAQKLTMMALAEVTGFVRQEIGHRIRLRYTPEIAFVQDRSLERGARITRLIDEIRAEEEARAAHKEEGN</sequence>
<proteinExistence type="inferred from homology"/>
<comment type="function">
    <text evidence="1">One of several proteins that assist in the late maturation steps of the functional core of the 30S ribosomal subunit. Associates with free 30S ribosomal subunits (but not with 30S subunits that are part of 70S ribosomes or polysomes). Required for efficient processing of 16S rRNA. May interact with the 5'-terminal helix region of 16S rRNA.</text>
</comment>
<comment type="subunit">
    <text evidence="1">Monomer. Binds 30S ribosomal subunits, but not 50S ribosomal subunits or 70S ribosomes.</text>
</comment>
<comment type="subcellular location">
    <subcellularLocation>
        <location evidence="1">Cytoplasm</location>
    </subcellularLocation>
</comment>
<comment type="similarity">
    <text evidence="1">Belongs to the RbfA family.</text>
</comment>
<feature type="chain" id="PRO_0000102667" description="Ribosome-binding factor A">
    <location>
        <begin position="1"/>
        <end position="129"/>
    </location>
</feature>
<name>RBFA_GLOVI</name>
<accession>Q7NE48</accession>
<keyword id="KW-0963">Cytoplasm</keyword>
<keyword id="KW-1185">Reference proteome</keyword>
<keyword id="KW-0690">Ribosome biogenesis</keyword>
<protein>
    <recommendedName>
        <fullName evidence="1">Ribosome-binding factor A</fullName>
    </recommendedName>
</protein>
<evidence type="ECO:0000255" key="1">
    <source>
        <dbReference type="HAMAP-Rule" id="MF_00003"/>
    </source>
</evidence>